<proteinExistence type="evidence at transcript level"/>
<reference key="1">
    <citation type="journal article" date="2006" name="Virus Res.">
        <title>Completion of the genome sequence of Lettuce necrotic yellows virus, type species of the genus Cytorhabdovirus.</title>
        <authorList>
            <person name="Dietzgen R.G."/>
            <person name="Callaghan B."/>
            <person name="Wetzel T."/>
            <person name="Dale J.L."/>
        </authorList>
    </citation>
    <scope>NUCLEOTIDE SEQUENCE [GENOMIC RNA]</scope>
</reference>
<organism>
    <name type="scientific">Lettuce necrotic yellows virus (isolate 318)</name>
    <name type="common">LNYV</name>
    <dbReference type="NCBI Taxonomy" id="928304"/>
    <lineage>
        <taxon>Viruses</taxon>
        <taxon>Riboviria</taxon>
        <taxon>Orthornavirae</taxon>
        <taxon>Negarnaviricota</taxon>
        <taxon>Haploviricotina</taxon>
        <taxon>Monjiviricetes</taxon>
        <taxon>Mononegavirales</taxon>
        <taxon>Rhabdoviridae</taxon>
        <taxon>Betarhabdovirinae</taxon>
        <taxon>Cytorhabdovirus</taxon>
        <taxon>Cytorhabdovirus lactucanecante</taxon>
    </lineage>
</organism>
<name>MATRX_LNYV3</name>
<evidence type="ECO:0000250" key="1"/>
<organismHost>
    <name type="scientific">Embergeria</name>
    <dbReference type="NCBI Taxonomy" id="43191"/>
</organismHost>
<organismHost>
    <name type="scientific">Lactuca sativa</name>
    <name type="common">Garden lettuce</name>
    <dbReference type="NCBI Taxonomy" id="4236"/>
</organismHost>
<organismHost>
    <name type="scientific">Reichardia tingitana</name>
    <dbReference type="NCBI Taxonomy" id="43208"/>
</organismHost>
<organismHost>
    <name type="scientific">Sonchus hydrophilus</name>
    <dbReference type="NCBI Taxonomy" id="255580"/>
</organismHost>
<organismHost>
    <name type="scientific">Sonchus oleraceus</name>
    <name type="common">Common sowthistle</name>
    <dbReference type="NCBI Taxonomy" id="50207"/>
</organismHost>
<protein>
    <recommendedName>
        <fullName>Matrix protein</fullName>
    </recommendedName>
</protein>
<accession>Q9E7N9</accession>
<dbReference type="EMBL" id="AF209033">
    <property type="protein sequence ID" value="AAG32646.1"/>
    <property type="molecule type" value="mRNA"/>
</dbReference>
<dbReference type="EMBL" id="AJ867584">
    <property type="protein sequence ID" value="CAI30424.1"/>
    <property type="molecule type" value="Genomic_RNA"/>
</dbReference>
<dbReference type="RefSeq" id="YP_425090.1">
    <property type="nucleotide sequence ID" value="NC_007642.1"/>
</dbReference>
<dbReference type="GeneID" id="3844363"/>
<dbReference type="KEGG" id="vg:3844363"/>
<dbReference type="Proteomes" id="UP000008592">
    <property type="component" value="Segment"/>
</dbReference>
<dbReference type="GO" id="GO:0033645">
    <property type="term" value="C:host cell endomembrane system"/>
    <property type="evidence" value="ECO:0007669"/>
    <property type="project" value="UniProtKB-SubCell"/>
</dbReference>
<dbReference type="GO" id="GO:0016020">
    <property type="term" value="C:membrane"/>
    <property type="evidence" value="ECO:0007669"/>
    <property type="project" value="UniProtKB-KW"/>
</dbReference>
<dbReference type="GO" id="GO:0019031">
    <property type="term" value="C:viral envelope"/>
    <property type="evidence" value="ECO:0007669"/>
    <property type="project" value="UniProtKB-KW"/>
</dbReference>
<dbReference type="GO" id="GO:0055036">
    <property type="term" value="C:virion membrane"/>
    <property type="evidence" value="ECO:0007669"/>
    <property type="project" value="UniProtKB-SubCell"/>
</dbReference>
<dbReference type="GO" id="GO:0039660">
    <property type="term" value="F:structural constituent of virion"/>
    <property type="evidence" value="ECO:0007669"/>
    <property type="project" value="UniProtKB-KW"/>
</dbReference>
<keyword id="KW-0053">Apoptosis</keyword>
<keyword id="KW-1043">Host membrane</keyword>
<keyword id="KW-0472">Membrane</keyword>
<keyword id="KW-1185">Reference proteome</keyword>
<keyword id="KW-0261">Viral envelope protein</keyword>
<keyword id="KW-0468">Viral matrix protein</keyword>
<keyword id="KW-0946">Virion</keyword>
<comment type="function">
    <text evidence="1">Plays a major role in assembly and budding of virion. Completely covers the ribonucleoprotein coil and keep it in condensed bullet-shaped form. Inhibits viral transcription and stimulates replication (By similarity).</text>
</comment>
<comment type="subunit">
    <text evidence="1">Homomultimer. Interacts with nucleoprotein and with the cytoplasmic domain of glycoprotein (By similarity).</text>
</comment>
<comment type="subcellular location">
    <subcellularLocation>
        <location>Virion membrane</location>
        <topology>Peripheral membrane protein</topology>
    </subcellularLocation>
    <subcellularLocation>
        <location evidence="1">Host endomembrane system</location>
        <topology evidence="1">Peripheral membrane protein</topology>
    </subcellularLocation>
</comment>
<comment type="miscellaneous">
    <text evidence="1">Most abundant protein in the virion.</text>
</comment>
<sequence>MSAKLNWYRITFNDTVWRFDTARGPKDGETCPLIASELFSSGLSEVFKSVTSFSEILRNMESRGYITNITLRADSDILGPGALRCEFLFPSEVFIPTSHTLKMGRSSLILEPHLVVLKECKYISSGKLDIGISSIEATSVAVLRRVKGPAFIGCMDDNPFGVLTKKPSDEKNVLASK</sequence>
<feature type="chain" id="PRO_0000299243" description="Matrix protein">
    <location>
        <begin position="1"/>
        <end position="177"/>
    </location>
</feature>
<gene>
    <name type="primary">M</name>
</gene>